<organism>
    <name type="scientific">Arabidopsis thaliana</name>
    <name type="common">Mouse-ear cress</name>
    <dbReference type="NCBI Taxonomy" id="3702"/>
    <lineage>
        <taxon>Eukaryota</taxon>
        <taxon>Viridiplantae</taxon>
        <taxon>Streptophyta</taxon>
        <taxon>Embryophyta</taxon>
        <taxon>Tracheophyta</taxon>
        <taxon>Spermatophyta</taxon>
        <taxon>Magnoliopsida</taxon>
        <taxon>eudicotyledons</taxon>
        <taxon>Gunneridae</taxon>
        <taxon>Pentapetalae</taxon>
        <taxon>rosids</taxon>
        <taxon>malvids</taxon>
        <taxon>Brassicales</taxon>
        <taxon>Brassicaceae</taxon>
        <taxon>Camelineae</taxon>
        <taxon>Arabidopsis</taxon>
    </lineage>
</organism>
<accession>Q3ECW8</accession>
<accession>F4HRB1</accession>
<accession>F4HRB2</accession>
<reference key="1">
    <citation type="journal article" date="2000" name="Nature">
        <title>Sequence and analysis of chromosome 1 of the plant Arabidopsis thaliana.</title>
        <authorList>
            <person name="Theologis A."/>
            <person name="Ecker J.R."/>
            <person name="Palm C.J."/>
            <person name="Federspiel N.A."/>
            <person name="Kaul S."/>
            <person name="White O."/>
            <person name="Alonso J."/>
            <person name="Altafi H."/>
            <person name="Araujo R."/>
            <person name="Bowman C.L."/>
            <person name="Brooks S.Y."/>
            <person name="Buehler E."/>
            <person name="Chan A."/>
            <person name="Chao Q."/>
            <person name="Chen H."/>
            <person name="Cheuk R.F."/>
            <person name="Chin C.W."/>
            <person name="Chung M.K."/>
            <person name="Conn L."/>
            <person name="Conway A.B."/>
            <person name="Conway A.R."/>
            <person name="Creasy T.H."/>
            <person name="Dewar K."/>
            <person name="Dunn P."/>
            <person name="Etgu P."/>
            <person name="Feldblyum T.V."/>
            <person name="Feng J.-D."/>
            <person name="Fong B."/>
            <person name="Fujii C.Y."/>
            <person name="Gill J.E."/>
            <person name="Goldsmith A.D."/>
            <person name="Haas B."/>
            <person name="Hansen N.F."/>
            <person name="Hughes B."/>
            <person name="Huizar L."/>
            <person name="Hunter J.L."/>
            <person name="Jenkins J."/>
            <person name="Johnson-Hopson C."/>
            <person name="Khan S."/>
            <person name="Khaykin E."/>
            <person name="Kim C.J."/>
            <person name="Koo H.L."/>
            <person name="Kremenetskaia I."/>
            <person name="Kurtz D.B."/>
            <person name="Kwan A."/>
            <person name="Lam B."/>
            <person name="Langin-Hooper S."/>
            <person name="Lee A."/>
            <person name="Lee J.M."/>
            <person name="Lenz C.A."/>
            <person name="Li J.H."/>
            <person name="Li Y.-P."/>
            <person name="Lin X."/>
            <person name="Liu S.X."/>
            <person name="Liu Z.A."/>
            <person name="Luros J.S."/>
            <person name="Maiti R."/>
            <person name="Marziali A."/>
            <person name="Militscher J."/>
            <person name="Miranda M."/>
            <person name="Nguyen M."/>
            <person name="Nierman W.C."/>
            <person name="Osborne B.I."/>
            <person name="Pai G."/>
            <person name="Peterson J."/>
            <person name="Pham P.K."/>
            <person name="Rizzo M."/>
            <person name="Rooney T."/>
            <person name="Rowley D."/>
            <person name="Sakano H."/>
            <person name="Salzberg S.L."/>
            <person name="Schwartz J.R."/>
            <person name="Shinn P."/>
            <person name="Southwick A.M."/>
            <person name="Sun H."/>
            <person name="Tallon L.J."/>
            <person name="Tambunga G."/>
            <person name="Toriumi M.J."/>
            <person name="Town C.D."/>
            <person name="Utterback T."/>
            <person name="Van Aken S."/>
            <person name="Vaysberg M."/>
            <person name="Vysotskaia V.S."/>
            <person name="Walker M."/>
            <person name="Wu D."/>
            <person name="Yu G."/>
            <person name="Fraser C.M."/>
            <person name="Venter J.C."/>
            <person name="Davis R.W."/>
        </authorList>
    </citation>
    <scope>NUCLEOTIDE SEQUENCE [LARGE SCALE GENOMIC DNA]</scope>
    <source>
        <strain>cv. Columbia</strain>
    </source>
</reference>
<reference key="2">
    <citation type="journal article" date="2017" name="Plant J.">
        <title>Araport11: a complete reannotation of the Arabidopsis thaliana reference genome.</title>
        <authorList>
            <person name="Cheng C.Y."/>
            <person name="Krishnakumar V."/>
            <person name="Chan A.P."/>
            <person name="Thibaud-Nissen F."/>
            <person name="Schobel S."/>
            <person name="Town C.D."/>
        </authorList>
    </citation>
    <scope>GENOME REANNOTATION</scope>
    <source>
        <strain>cv. Columbia</strain>
    </source>
</reference>
<reference key="3">
    <citation type="journal article" date="2004" name="Plant Mol. Biol.">
        <title>Functional genomic analysis of Arabidopsis thaliana glycoside hydrolase family 1.</title>
        <authorList>
            <person name="Xu Z."/>
            <person name="Escamilla-Trevino L.L."/>
            <person name="Zeng L."/>
            <person name="Lalgondar M."/>
            <person name="Bevan D.R."/>
            <person name="Winkel B.S.J."/>
            <person name="Mohamed A."/>
            <person name="Cheng C.-L."/>
            <person name="Shih M.-C."/>
            <person name="Poulton J.E."/>
            <person name="Esen A."/>
        </authorList>
    </citation>
    <scope>GENE FAMILY</scope>
    <scope>NOMENCLATURE</scope>
</reference>
<proteinExistence type="inferred from homology"/>
<sequence length="517" mass="58585">MEDVLTLITMIVLLLLAFHGFGKCSSDLYSRSDFPEGFVFGAGISAYQWEGAVDEDGRKPSVWDTFLHCRKMDNGDIACDGYHKYKEDVQLMAETGLHTFRFSISWSRLISNGRGSINPKGLQFYKNFIQELVKHGIEPHVTLHHYDFPQYLEDDYGGWTNRKIIKDFTAYADVCFREFGNHVKFWTTINEANIFTIGGYNDGNSPPGRCSFPGRNCTLGNSSTETYIVGHNLLLAHASVSRLYKQKYKDIQGGSVGFSLFAMNFTPSTNSKDDEIATKRANDFYLGWMLEPLIYGDYPDVMKRTIGSRLPVFSKEESEQVKGSSDFIGVIHYLTALVTNIDINPSLSGIPDFNSDMGESINILSMRVRISRLPNSDEKCLIFFITLSILEYIKQSYGNPPVYILENGKTMNQDLELQQKDTPRIEYLDAYIGAVLKAVRNGSDTRGYFVWSFMDLYELLNGYKSSFGLYSVNFSDPHRKRSPKLSAHWYSGFLKGKPTFLGSQGITQLHSNFSSSR</sequence>
<keyword id="KW-0025">Alternative splicing</keyword>
<keyword id="KW-1015">Disulfide bond</keyword>
<keyword id="KW-0325">Glycoprotein</keyword>
<keyword id="KW-0326">Glycosidase</keyword>
<keyword id="KW-0378">Hydrolase</keyword>
<keyword id="KW-1185">Reference proteome</keyword>
<keyword id="KW-0732">Signal</keyword>
<feature type="signal peptide" evidence="5">
    <location>
        <begin position="1"/>
        <end position="22"/>
    </location>
</feature>
<feature type="chain" id="PRO_0000389563" description="Beta-glucosidase 1">
    <location>
        <begin position="23"/>
        <end position="517"/>
    </location>
</feature>
<feature type="active site" description="Proton donor" evidence="3">
    <location>
        <position position="191"/>
    </location>
</feature>
<feature type="active site" description="Nucleophile" evidence="3">
    <location>
        <position position="406"/>
    </location>
</feature>
<feature type="binding site" evidence="3">
    <location>
        <position position="48"/>
    </location>
    <ligand>
        <name>a beta-D-glucoside</name>
        <dbReference type="ChEBI" id="CHEBI:22798"/>
    </ligand>
</feature>
<feature type="binding site" evidence="3">
    <location>
        <position position="145"/>
    </location>
    <ligand>
        <name>a beta-D-glucoside</name>
        <dbReference type="ChEBI" id="CHEBI:22798"/>
    </ligand>
</feature>
<feature type="binding site" evidence="3">
    <location>
        <begin position="190"/>
        <end position="191"/>
    </location>
    <ligand>
        <name>a beta-D-glucoside</name>
        <dbReference type="ChEBI" id="CHEBI:22798"/>
    </ligand>
</feature>
<feature type="binding site" evidence="3">
    <location>
        <position position="333"/>
    </location>
    <ligand>
        <name>a beta-D-glucoside</name>
        <dbReference type="ChEBI" id="CHEBI:22798"/>
    </ligand>
</feature>
<feature type="binding site" evidence="4">
    <location>
        <position position="406"/>
    </location>
    <ligand>
        <name>a beta-D-glucoside</name>
        <dbReference type="ChEBI" id="CHEBI:22798"/>
    </ligand>
</feature>
<feature type="binding site" evidence="3">
    <location>
        <position position="451"/>
    </location>
    <ligand>
        <name>a beta-D-glucoside</name>
        <dbReference type="ChEBI" id="CHEBI:22798"/>
    </ligand>
</feature>
<feature type="binding site" evidence="2">
    <location>
        <position position="467"/>
    </location>
    <ligand>
        <name>a beta-D-glucoside</name>
        <dbReference type="ChEBI" id="CHEBI:22798"/>
    </ligand>
</feature>
<feature type="glycosylation site" description="N-linked (GlcNAc...) asparagine" evidence="6">
    <location>
        <position position="216"/>
    </location>
</feature>
<feature type="glycosylation site" description="N-linked (GlcNAc...) asparagine" evidence="6">
    <location>
        <position position="221"/>
    </location>
</feature>
<feature type="glycosylation site" description="N-linked (GlcNAc...) asparagine" evidence="6">
    <location>
        <position position="441"/>
    </location>
</feature>
<feature type="glycosylation site" description="N-linked (GlcNAc...) asparagine" evidence="6">
    <location>
        <position position="473"/>
    </location>
</feature>
<feature type="glycosylation site" description="N-linked (GlcNAc...) asparagine" evidence="6">
    <location>
        <position position="512"/>
    </location>
</feature>
<feature type="disulfide bond" evidence="3">
    <location>
        <begin position="210"/>
        <end position="217"/>
    </location>
</feature>
<dbReference type="EC" id="3.2.1.21" evidence="1"/>
<dbReference type="EMBL" id="AC084820">
    <property type="status" value="NOT_ANNOTATED_CDS"/>
    <property type="molecule type" value="Genomic_DNA"/>
</dbReference>
<dbReference type="EMBL" id="CP002684">
    <property type="protein sequence ID" value="AEE32093.1"/>
    <property type="status" value="ALT_SEQ"/>
    <property type="molecule type" value="Genomic_DNA"/>
</dbReference>
<dbReference type="EMBL" id="CP002684">
    <property type="protein sequence ID" value="AEE32094.1"/>
    <property type="status" value="ALT_SEQ"/>
    <property type="molecule type" value="Genomic_DNA"/>
</dbReference>
<dbReference type="EMBL" id="CP002684">
    <property type="protein sequence ID" value="ANM60926.1"/>
    <property type="molecule type" value="Genomic_DNA"/>
</dbReference>
<dbReference type="RefSeq" id="NP_001323174.1">
    <molecule id="Q3ECW8-1"/>
    <property type="nucleotide sequence ID" value="NM_001333250.1"/>
</dbReference>
<dbReference type="RefSeq" id="NP_849771.2">
    <property type="nucleotide sequence ID" value="NM_179440.2"/>
</dbReference>
<dbReference type="RefSeq" id="NP_973974.2">
    <property type="nucleotide sequence ID" value="NM_202245.2"/>
</dbReference>
<dbReference type="SMR" id="Q3ECW8"/>
<dbReference type="FunCoup" id="Q3ECW8">
    <property type="interactions" value="193"/>
</dbReference>
<dbReference type="STRING" id="3702.Q3ECW8"/>
<dbReference type="CAZy" id="GH1">
    <property type="family name" value="Glycoside Hydrolase Family 1"/>
</dbReference>
<dbReference type="GlyCosmos" id="Q3ECW8">
    <property type="glycosylation" value="5 sites, No reported glycans"/>
</dbReference>
<dbReference type="GlyGen" id="Q3ECW8">
    <property type="glycosylation" value="5 sites"/>
</dbReference>
<dbReference type="PaxDb" id="3702-AT1G45191.1"/>
<dbReference type="ProteomicsDB" id="240463">
    <molecule id="Q3ECW8-1"/>
</dbReference>
<dbReference type="EnsemblPlants" id="AT1G45191.6">
    <molecule id="Q3ECW8-1"/>
    <property type="protein sequence ID" value="AT1G45191.6"/>
    <property type="gene ID" value="AT1G45191"/>
</dbReference>
<dbReference type="GeneID" id="841088"/>
<dbReference type="Gramene" id="AT1G45191.6">
    <molecule id="Q3ECW8-1"/>
    <property type="protein sequence ID" value="AT1G45191.6"/>
    <property type="gene ID" value="AT1G45191"/>
</dbReference>
<dbReference type="KEGG" id="ath:AT1G45191"/>
<dbReference type="Araport" id="AT1G45191"/>
<dbReference type="TAIR" id="AT1G45191">
    <property type="gene designation" value="BGLU1"/>
</dbReference>
<dbReference type="eggNOG" id="KOG0626">
    <property type="taxonomic scope" value="Eukaryota"/>
</dbReference>
<dbReference type="HOGENOM" id="CLU_001859_1_0_1"/>
<dbReference type="InParanoid" id="Q3ECW8"/>
<dbReference type="BioCyc" id="ARA:AT1G45191-MONOMER"/>
<dbReference type="PRO" id="PR:Q3ECW8"/>
<dbReference type="Proteomes" id="UP000006548">
    <property type="component" value="Chromosome 1"/>
</dbReference>
<dbReference type="ExpressionAtlas" id="Q3ECW8">
    <property type="expression patterns" value="baseline and differential"/>
</dbReference>
<dbReference type="GO" id="GO:0008422">
    <property type="term" value="F:beta-glucosidase activity"/>
    <property type="evidence" value="ECO:0007669"/>
    <property type="project" value="UniProtKB-EC"/>
</dbReference>
<dbReference type="GO" id="GO:0005975">
    <property type="term" value="P:carbohydrate metabolic process"/>
    <property type="evidence" value="ECO:0007669"/>
    <property type="project" value="InterPro"/>
</dbReference>
<dbReference type="FunFam" id="3.20.20.80:FF:000069">
    <property type="entry name" value="Beta-glucosidase 1"/>
    <property type="match status" value="1"/>
</dbReference>
<dbReference type="Gene3D" id="3.20.20.80">
    <property type="entry name" value="Glycosidases"/>
    <property type="match status" value="1"/>
</dbReference>
<dbReference type="InterPro" id="IPR001360">
    <property type="entry name" value="Glyco_hydro_1"/>
</dbReference>
<dbReference type="InterPro" id="IPR033132">
    <property type="entry name" value="Glyco_hydro_1_N_CS"/>
</dbReference>
<dbReference type="InterPro" id="IPR017853">
    <property type="entry name" value="Glycoside_hydrolase_SF"/>
</dbReference>
<dbReference type="PANTHER" id="PTHR10353:SF150">
    <property type="entry name" value="BETA-GLUCOSIDASE 1-RELATED"/>
    <property type="match status" value="1"/>
</dbReference>
<dbReference type="PANTHER" id="PTHR10353">
    <property type="entry name" value="GLYCOSYL HYDROLASE"/>
    <property type="match status" value="1"/>
</dbReference>
<dbReference type="Pfam" id="PF00232">
    <property type="entry name" value="Glyco_hydro_1"/>
    <property type="match status" value="1"/>
</dbReference>
<dbReference type="PRINTS" id="PR00131">
    <property type="entry name" value="GLHYDRLASE1"/>
</dbReference>
<dbReference type="SUPFAM" id="SSF51445">
    <property type="entry name" value="(Trans)glycosidases"/>
    <property type="match status" value="1"/>
</dbReference>
<dbReference type="PROSITE" id="PS00653">
    <property type="entry name" value="GLYCOSYL_HYDROL_F1_2"/>
    <property type="match status" value="1"/>
</dbReference>
<comment type="catalytic activity">
    <reaction evidence="1">
        <text>Hydrolysis of terminal, non-reducing beta-D-glucosyl residues with release of beta-D-glucose.</text>
        <dbReference type="EC" id="3.2.1.21"/>
    </reaction>
</comment>
<comment type="alternative products">
    <event type="alternative splicing"/>
    <isoform>
        <id>Q3ECW8-1</id>
        <name>1</name>
        <sequence type="displayed"/>
    </isoform>
    <text>A number of isoforms are produced. According to EST sequences.</text>
</comment>
<comment type="similarity">
    <text evidence="8">Belongs to the glycosyl hydrolase 1 family.</text>
</comment>
<comment type="sequence caution" evidence="8">
    <conflict type="erroneous gene model prediction">
        <sequence resource="EMBL-CDS" id="AEE32093"/>
    </conflict>
</comment>
<comment type="sequence caution" evidence="8">
    <conflict type="erroneous gene model prediction">
        <sequence resource="EMBL-CDS" id="AEE32094"/>
    </conflict>
</comment>
<gene>
    <name evidence="7" type="primary">BGLU1</name>
    <name evidence="9" type="ordered locus">At1g45191</name>
    <name evidence="10" type="ORF">T2P3</name>
</gene>
<evidence type="ECO:0000250" key="1">
    <source>
        <dbReference type="UniProtKB" id="O64879"/>
    </source>
</evidence>
<evidence type="ECO:0000250" key="2">
    <source>
        <dbReference type="UniProtKB" id="Q1XH05"/>
    </source>
</evidence>
<evidence type="ECO:0000250" key="3">
    <source>
        <dbReference type="UniProtKB" id="Q7XSK0"/>
    </source>
</evidence>
<evidence type="ECO:0000250" key="4">
    <source>
        <dbReference type="UniProtKB" id="Q9SPP9"/>
    </source>
</evidence>
<evidence type="ECO:0000255" key="5"/>
<evidence type="ECO:0000255" key="6">
    <source>
        <dbReference type="PROSITE-ProRule" id="PRU00498"/>
    </source>
</evidence>
<evidence type="ECO:0000303" key="7">
    <source>
    </source>
</evidence>
<evidence type="ECO:0000305" key="8"/>
<evidence type="ECO:0000312" key="9">
    <source>
        <dbReference type="Araport" id="AT1G45191"/>
    </source>
</evidence>
<evidence type="ECO:0000312" key="10">
    <source>
        <dbReference type="EMBL" id="AC084820"/>
    </source>
</evidence>
<name>BGL01_ARATH</name>
<protein>
    <recommendedName>
        <fullName evidence="7">Beta-glucosidase 1</fullName>
        <shortName evidence="7">AtBGLU1</shortName>
        <ecNumber evidence="1">3.2.1.21</ecNumber>
    </recommendedName>
</protein>